<accession>D2ZZC1</accession>
<proteinExistence type="evidence at protein level"/>
<sequence>MQYGMDSFGLRGIPHQVFIKKKEGKIMSLAWWKRELFGGWTHFEAVWLLMFLGIQAVVFVFNPDSWLASVAAVTGILCVVFVGKGKISNYLFGLISVSLYAYVSYTFKLYGEMMLNLLVYVPVQFVGFAMWRKHMALGETAETEEVKAKALTVRQWLLVVAASVVGTSVYIEWLHHLGSALPTLDGVTVVVSIVAQVLMILRYREQWALWIVVNILTISLWAVAWFKNGETSLPLLLMYVMYLCNSVYGYINWTKLVKRHSGQ</sequence>
<organism>
    <name type="scientific">Neisseria mucosa (strain ATCC 25996 / DSM 4631 / NCTC 10774 / M26)</name>
    <dbReference type="NCBI Taxonomy" id="546266"/>
    <lineage>
        <taxon>Bacteria</taxon>
        <taxon>Pseudomonadati</taxon>
        <taxon>Pseudomonadota</taxon>
        <taxon>Betaproteobacteria</taxon>
        <taxon>Neisseriales</taxon>
        <taxon>Neisseriaceae</taxon>
        <taxon>Neisseria</taxon>
    </lineage>
</organism>
<gene>
    <name evidence="5" type="primary">pnuC</name>
    <name evidence="5" type="ORF">NEIMUCOT_05996</name>
</gene>
<dbReference type="EMBL" id="ACDX02000017">
    <property type="protein sequence ID" value="EFC87623.1"/>
    <property type="molecule type" value="Genomic_DNA"/>
</dbReference>
<dbReference type="PDB" id="4QTN">
    <property type="method" value="X-ray"/>
    <property type="resolution" value="2.80 A"/>
    <property type="chains" value="A/B/C=28-263"/>
</dbReference>
<dbReference type="PDBsum" id="4QTN"/>
<dbReference type="SMR" id="D2ZZC1"/>
<dbReference type="DIP" id="DIP-61055N"/>
<dbReference type="EvolutionaryTrace" id="D2ZZC1"/>
<dbReference type="Proteomes" id="UP000003344">
    <property type="component" value="Unassembled WGS sequence"/>
</dbReference>
<dbReference type="GO" id="GO:0016020">
    <property type="term" value="C:membrane"/>
    <property type="evidence" value="ECO:0000314"/>
    <property type="project" value="UniProtKB"/>
</dbReference>
<dbReference type="GO" id="GO:0005886">
    <property type="term" value="C:plasma membrane"/>
    <property type="evidence" value="ECO:0007669"/>
    <property type="project" value="UniProtKB-SubCell"/>
</dbReference>
<dbReference type="GO" id="GO:0042802">
    <property type="term" value="F:identical protein binding"/>
    <property type="evidence" value="ECO:0000353"/>
    <property type="project" value="IntAct"/>
</dbReference>
<dbReference type="GO" id="GO:0034257">
    <property type="term" value="F:nicotinamide riboside transmembrane transporter activity"/>
    <property type="evidence" value="ECO:0007669"/>
    <property type="project" value="InterPro"/>
</dbReference>
<dbReference type="GO" id="GO:0070207">
    <property type="term" value="P:protein homotrimerization"/>
    <property type="evidence" value="ECO:0000314"/>
    <property type="project" value="UniProtKB"/>
</dbReference>
<dbReference type="InterPro" id="IPR006419">
    <property type="entry name" value="NMN_transpt_PnuC"/>
</dbReference>
<dbReference type="NCBIfam" id="TIGR01528">
    <property type="entry name" value="NMN_trans_PnuC"/>
    <property type="match status" value="1"/>
</dbReference>
<dbReference type="PANTHER" id="PTHR36122">
    <property type="entry name" value="NICOTINAMIDE RIBOSIDE TRANSPORTER PNUC"/>
    <property type="match status" value="1"/>
</dbReference>
<dbReference type="PANTHER" id="PTHR36122:SF2">
    <property type="entry name" value="NICOTINAMIDE RIBOSIDE TRANSPORTER PNUC"/>
    <property type="match status" value="1"/>
</dbReference>
<dbReference type="Pfam" id="PF04973">
    <property type="entry name" value="NMN_transporter"/>
    <property type="match status" value="1"/>
</dbReference>
<protein>
    <recommendedName>
        <fullName evidence="3">Nicotinamide riboside transporter PnuC</fullName>
    </recommendedName>
</protein>
<reference key="1">
    <citation type="submission" date="2009-10" db="EMBL/GenBank/DDBJ databases">
        <authorList>
            <person name="Weinstock G."/>
            <person name="Sodergren E."/>
            <person name="Clifton S."/>
            <person name="Fulton L."/>
            <person name="Fulton B."/>
            <person name="Courtney L."/>
            <person name="Fronick C."/>
            <person name="Harrison M."/>
            <person name="Strong C."/>
            <person name="Farmer C."/>
            <person name="Delahaunty K."/>
            <person name="Markovic C."/>
            <person name="Hall O."/>
            <person name="Minx P."/>
            <person name="Tomlinson C."/>
            <person name="Mitreva M."/>
            <person name="Nelson J."/>
            <person name="Hou S."/>
            <person name="Wollam A."/>
            <person name="Pepin K.H."/>
            <person name="Johnson M."/>
            <person name="Bhonagiri V."/>
            <person name="Nash W.E."/>
            <person name="Warren W."/>
            <person name="Chinwalla A."/>
            <person name="Mardis E.R."/>
            <person name="Wilson R.K."/>
        </authorList>
    </citation>
    <scope>NUCLEOTIDE SEQUENCE [LARGE SCALE GENOMIC DNA]</scope>
    <source>
        <strain>ATCC 25996 / DSM 4631 / NCTC 10774 / M26</strain>
    </source>
</reference>
<reference evidence="6" key="2">
    <citation type="journal article" date="2014" name="Nat. Struct. Mol. Biol.">
        <title>Crystal structure of the vitamin B3 transporter PnuC, a full-length SWEET homolog.</title>
        <authorList>
            <person name="Jaehme M."/>
            <person name="Guskov A."/>
            <person name="Slotboom D.J."/>
        </authorList>
    </citation>
    <scope>X-RAY CRYSTALLOGRAPHY (2.80 ANGSTROMS) OF 28-263 IN COMPLEX WITH NICOTINAMIDE RIBOSIDE</scope>
    <scope>SUBCELLULAR LOCATION</scope>
    <scope>SUBUNIT</scope>
    <scope>TOPOLOGY</scope>
</reference>
<comment type="function">
    <text evidence="1">Required for nicotinamide riboside transport across the inner membrane.</text>
</comment>
<comment type="subunit">
    <text evidence="2">Homotrimer.</text>
</comment>
<comment type="interaction">
    <interactant intactId="EBI-16123343">
        <id>D2ZZC1</id>
    </interactant>
    <interactant intactId="EBI-16123343">
        <id>D2ZZC1</id>
        <label>pnuC</label>
    </interactant>
    <organismsDiffer>false</organismsDiffer>
    <experiments>3</experiments>
</comment>
<comment type="subcellular location">
    <subcellularLocation>
        <location evidence="4">Cell inner membrane</location>
        <topology evidence="2">Multi-pass membrane protein</topology>
    </subcellularLocation>
</comment>
<comment type="similarity">
    <text evidence="3">Belongs to the nicotinamide ribonucleoside (NR) uptake permease (TC 4.B.1) family.</text>
</comment>
<evidence type="ECO:0000250" key="1">
    <source>
        <dbReference type="UniProtKB" id="Q57425"/>
    </source>
</evidence>
<evidence type="ECO:0000269" key="2">
    <source>
    </source>
</evidence>
<evidence type="ECO:0000305" key="3"/>
<evidence type="ECO:0000305" key="4">
    <source>
    </source>
</evidence>
<evidence type="ECO:0000312" key="5">
    <source>
        <dbReference type="EMBL" id="EFC87623.1"/>
    </source>
</evidence>
<evidence type="ECO:0007744" key="6">
    <source>
        <dbReference type="PDB" id="4QTN"/>
    </source>
</evidence>
<evidence type="ECO:0007829" key="7">
    <source>
        <dbReference type="PDB" id="4QTN"/>
    </source>
</evidence>
<keyword id="KW-0002">3D-structure</keyword>
<keyword id="KW-0997">Cell inner membrane</keyword>
<keyword id="KW-1003">Cell membrane</keyword>
<keyword id="KW-0472">Membrane</keyword>
<keyword id="KW-0520">NAD</keyword>
<keyword id="KW-0812">Transmembrane</keyword>
<keyword id="KW-1133">Transmembrane helix</keyword>
<keyword id="KW-0813">Transport</keyword>
<name>PNUC_NEIM2</name>
<feature type="chain" id="PRO_0000432586" description="Nicotinamide riboside transporter PnuC">
    <location>
        <begin position="1"/>
        <end position="263"/>
    </location>
</feature>
<feature type="topological domain" description="Cytoplasmic" evidence="3">
    <location>
        <begin position="1"/>
        <end position="40"/>
    </location>
</feature>
<feature type="transmembrane region" description="Helical" evidence="2">
    <location>
        <begin position="41"/>
        <end position="61"/>
    </location>
</feature>
<feature type="topological domain" description="Periplasmic" evidence="3">
    <location>
        <position position="62"/>
    </location>
</feature>
<feature type="transmembrane region" description="Helical" evidence="2">
    <location>
        <begin position="63"/>
        <end position="83"/>
    </location>
</feature>
<feature type="topological domain" description="Cytoplasmic" evidence="3">
    <location>
        <begin position="84"/>
        <end position="86"/>
    </location>
</feature>
<feature type="transmembrane region" description="Helical" evidence="2">
    <location>
        <begin position="87"/>
        <end position="107"/>
    </location>
</feature>
<feature type="topological domain" description="Periplasmic" evidence="3">
    <location>
        <begin position="108"/>
        <end position="109"/>
    </location>
</feature>
<feature type="transmembrane region" description="Helical" evidence="2">
    <location>
        <begin position="110"/>
        <end position="131"/>
    </location>
</feature>
<feature type="topological domain" description="Cytoplasmic" evidence="3">
    <location>
        <begin position="132"/>
        <end position="155"/>
    </location>
</feature>
<feature type="transmembrane region" description="Helical" evidence="2">
    <location>
        <begin position="156"/>
        <end position="177"/>
    </location>
</feature>
<feature type="topological domain" description="Periplasmic" evidence="3">
    <location>
        <begin position="178"/>
        <end position="180"/>
    </location>
</feature>
<feature type="transmembrane region" description="Helical" evidence="2">
    <location>
        <begin position="181"/>
        <end position="201"/>
    </location>
</feature>
<feature type="topological domain" description="Cytoplasmic" evidence="3">
    <location>
        <begin position="202"/>
        <end position="205"/>
    </location>
</feature>
<feature type="transmembrane region" description="Helical" evidence="2">
    <location>
        <begin position="206"/>
        <end position="226"/>
    </location>
</feature>
<feature type="topological domain" description="Periplasmic" evidence="3">
    <location>
        <begin position="227"/>
        <end position="232"/>
    </location>
</feature>
<feature type="transmembrane region" description="Helical" evidence="2">
    <location>
        <begin position="233"/>
        <end position="253"/>
    </location>
</feature>
<feature type="topological domain" description="Cytoplasmic" evidence="3">
    <location>
        <begin position="254"/>
        <end position="263"/>
    </location>
</feature>
<feature type="binding site" evidence="6">
    <location>
        <position position="124"/>
    </location>
    <ligand>
        <name>beta-nicotinamide D-riboside</name>
        <dbReference type="ChEBI" id="CHEBI:15927"/>
    </ligand>
</feature>
<feature type="binding site" evidence="6">
    <location>
        <position position="196"/>
    </location>
    <ligand>
        <name>beta-nicotinamide D-riboside</name>
        <dbReference type="ChEBI" id="CHEBI:15927"/>
    </ligand>
</feature>
<feature type="binding site" evidence="6">
    <location>
        <position position="210"/>
    </location>
    <ligand>
        <name>beta-nicotinamide D-riboside</name>
        <dbReference type="ChEBI" id="CHEBI:15927"/>
    </ligand>
</feature>
<feature type="binding site" evidence="6">
    <location>
        <position position="214"/>
    </location>
    <ligand>
        <name>beta-nicotinamide D-riboside</name>
        <dbReference type="ChEBI" id="CHEBI:15927"/>
    </ligand>
</feature>
<feature type="binding site" evidence="6">
    <location>
        <position position="242"/>
    </location>
    <ligand>
        <name>beta-nicotinamide D-riboside</name>
        <dbReference type="ChEBI" id="CHEBI:15927"/>
    </ligand>
</feature>
<feature type="helix" evidence="7">
    <location>
        <begin position="29"/>
        <end position="37"/>
    </location>
</feature>
<feature type="helix" evidence="7">
    <location>
        <begin position="42"/>
        <end position="61"/>
    </location>
</feature>
<feature type="helix" evidence="7">
    <location>
        <begin position="63"/>
        <end position="65"/>
    </location>
</feature>
<feature type="helix" evidence="7">
    <location>
        <begin position="66"/>
        <end position="84"/>
    </location>
</feature>
<feature type="helix" evidence="7">
    <location>
        <begin position="89"/>
        <end position="106"/>
    </location>
</feature>
<feature type="helix" evidence="7">
    <location>
        <begin position="110"/>
        <end position="118"/>
    </location>
</feature>
<feature type="helix" evidence="7">
    <location>
        <begin position="120"/>
        <end position="131"/>
    </location>
</feature>
<feature type="helix" evidence="7">
    <location>
        <begin position="132"/>
        <end position="134"/>
    </location>
</feature>
<feature type="strand" evidence="7">
    <location>
        <begin position="141"/>
        <end position="143"/>
    </location>
</feature>
<feature type="helix" evidence="7">
    <location>
        <begin position="153"/>
        <end position="175"/>
    </location>
</feature>
<feature type="helix" evidence="7">
    <location>
        <begin position="183"/>
        <end position="200"/>
    </location>
</feature>
<feature type="helix" evidence="7">
    <location>
        <begin position="206"/>
        <end position="226"/>
    </location>
</feature>
<feature type="turn" evidence="7">
    <location>
        <begin position="227"/>
        <end position="229"/>
    </location>
</feature>
<feature type="helix" evidence="7">
    <location>
        <begin position="233"/>
        <end position="259"/>
    </location>
</feature>